<feature type="chain" id="PRO_1000015094" description="Small ribosomal subunit protein uS10">
    <location>
        <begin position="1"/>
        <end position="102"/>
    </location>
</feature>
<proteinExistence type="inferred from homology"/>
<gene>
    <name evidence="1" type="primary">rpsJ</name>
    <name type="ordered locus">H16_A3490</name>
</gene>
<dbReference type="EMBL" id="AM260479">
    <property type="protein sequence ID" value="CAJ94558.1"/>
    <property type="molecule type" value="Genomic_DNA"/>
</dbReference>
<dbReference type="RefSeq" id="WP_006160488.1">
    <property type="nucleotide sequence ID" value="NZ_CP039287.1"/>
</dbReference>
<dbReference type="SMR" id="Q0K613"/>
<dbReference type="STRING" id="381666.H16_A3490"/>
<dbReference type="GeneID" id="98403017"/>
<dbReference type="KEGG" id="reh:H16_A3490"/>
<dbReference type="eggNOG" id="COG0051">
    <property type="taxonomic scope" value="Bacteria"/>
</dbReference>
<dbReference type="HOGENOM" id="CLU_122625_1_3_4"/>
<dbReference type="OrthoDB" id="9804464at2"/>
<dbReference type="Proteomes" id="UP000008210">
    <property type="component" value="Chromosome 1"/>
</dbReference>
<dbReference type="GO" id="GO:1990904">
    <property type="term" value="C:ribonucleoprotein complex"/>
    <property type="evidence" value="ECO:0007669"/>
    <property type="project" value="UniProtKB-KW"/>
</dbReference>
<dbReference type="GO" id="GO:0005840">
    <property type="term" value="C:ribosome"/>
    <property type="evidence" value="ECO:0007669"/>
    <property type="project" value="UniProtKB-KW"/>
</dbReference>
<dbReference type="GO" id="GO:0003735">
    <property type="term" value="F:structural constituent of ribosome"/>
    <property type="evidence" value="ECO:0007669"/>
    <property type="project" value="InterPro"/>
</dbReference>
<dbReference type="GO" id="GO:0000049">
    <property type="term" value="F:tRNA binding"/>
    <property type="evidence" value="ECO:0007669"/>
    <property type="project" value="UniProtKB-UniRule"/>
</dbReference>
<dbReference type="GO" id="GO:0006412">
    <property type="term" value="P:translation"/>
    <property type="evidence" value="ECO:0007669"/>
    <property type="project" value="UniProtKB-UniRule"/>
</dbReference>
<dbReference type="FunFam" id="3.30.70.600:FF:000001">
    <property type="entry name" value="30S ribosomal protein S10"/>
    <property type="match status" value="1"/>
</dbReference>
<dbReference type="Gene3D" id="3.30.70.600">
    <property type="entry name" value="Ribosomal protein S10 domain"/>
    <property type="match status" value="1"/>
</dbReference>
<dbReference type="HAMAP" id="MF_00508">
    <property type="entry name" value="Ribosomal_uS10"/>
    <property type="match status" value="1"/>
</dbReference>
<dbReference type="InterPro" id="IPR001848">
    <property type="entry name" value="Ribosomal_uS10"/>
</dbReference>
<dbReference type="InterPro" id="IPR018268">
    <property type="entry name" value="Ribosomal_uS10_CS"/>
</dbReference>
<dbReference type="InterPro" id="IPR027486">
    <property type="entry name" value="Ribosomal_uS10_dom"/>
</dbReference>
<dbReference type="InterPro" id="IPR036838">
    <property type="entry name" value="Ribosomal_uS10_dom_sf"/>
</dbReference>
<dbReference type="NCBIfam" id="NF001861">
    <property type="entry name" value="PRK00596.1"/>
    <property type="match status" value="1"/>
</dbReference>
<dbReference type="NCBIfam" id="TIGR01049">
    <property type="entry name" value="rpsJ_bact"/>
    <property type="match status" value="1"/>
</dbReference>
<dbReference type="PANTHER" id="PTHR11700">
    <property type="entry name" value="30S RIBOSOMAL PROTEIN S10 FAMILY MEMBER"/>
    <property type="match status" value="1"/>
</dbReference>
<dbReference type="Pfam" id="PF00338">
    <property type="entry name" value="Ribosomal_S10"/>
    <property type="match status" value="1"/>
</dbReference>
<dbReference type="PRINTS" id="PR00971">
    <property type="entry name" value="RIBOSOMALS10"/>
</dbReference>
<dbReference type="SMART" id="SM01403">
    <property type="entry name" value="Ribosomal_S10"/>
    <property type="match status" value="1"/>
</dbReference>
<dbReference type="SUPFAM" id="SSF54999">
    <property type="entry name" value="Ribosomal protein S10"/>
    <property type="match status" value="1"/>
</dbReference>
<dbReference type="PROSITE" id="PS00361">
    <property type="entry name" value="RIBOSOMAL_S10"/>
    <property type="match status" value="1"/>
</dbReference>
<evidence type="ECO:0000255" key="1">
    <source>
        <dbReference type="HAMAP-Rule" id="MF_00508"/>
    </source>
</evidence>
<evidence type="ECO:0000305" key="2"/>
<sequence length="102" mass="11678">MQNQKIRIRLKAFDYRLIDQSAAEIVDTAKRTGAIVKGPVPLPTRIQRFDILRSPHVNKTSRDQFEIRTHQRLMDIVDPTDKTVDALMKLDLPAGVDVEIKV</sequence>
<comment type="function">
    <text evidence="1">Involved in the binding of tRNA to the ribosomes.</text>
</comment>
<comment type="subunit">
    <text evidence="1">Part of the 30S ribosomal subunit.</text>
</comment>
<comment type="similarity">
    <text evidence="1">Belongs to the universal ribosomal protein uS10 family.</text>
</comment>
<reference key="1">
    <citation type="journal article" date="2006" name="Nat. Biotechnol.">
        <title>Genome sequence of the bioplastic-producing 'Knallgas' bacterium Ralstonia eutropha H16.</title>
        <authorList>
            <person name="Pohlmann A."/>
            <person name="Fricke W.F."/>
            <person name="Reinecke F."/>
            <person name="Kusian B."/>
            <person name="Liesegang H."/>
            <person name="Cramm R."/>
            <person name="Eitinger T."/>
            <person name="Ewering C."/>
            <person name="Poetter M."/>
            <person name="Schwartz E."/>
            <person name="Strittmatter A."/>
            <person name="Voss I."/>
            <person name="Gottschalk G."/>
            <person name="Steinbuechel A."/>
            <person name="Friedrich B."/>
            <person name="Bowien B."/>
        </authorList>
    </citation>
    <scope>NUCLEOTIDE SEQUENCE [LARGE SCALE GENOMIC DNA]</scope>
    <source>
        <strain>ATCC 17699 / DSM 428 / KCTC 22496 / NCIMB 10442 / H16 / Stanier 337</strain>
    </source>
</reference>
<name>RS10_CUPNH</name>
<accession>Q0K613</accession>
<keyword id="KW-1185">Reference proteome</keyword>
<keyword id="KW-0687">Ribonucleoprotein</keyword>
<keyword id="KW-0689">Ribosomal protein</keyword>
<protein>
    <recommendedName>
        <fullName evidence="1">Small ribosomal subunit protein uS10</fullName>
    </recommendedName>
    <alternativeName>
        <fullName evidence="2">30S ribosomal protein S10</fullName>
    </alternativeName>
</protein>
<organism>
    <name type="scientific">Cupriavidus necator (strain ATCC 17699 / DSM 428 / KCTC 22496 / NCIMB 10442 / H16 / Stanier 337)</name>
    <name type="common">Ralstonia eutropha</name>
    <dbReference type="NCBI Taxonomy" id="381666"/>
    <lineage>
        <taxon>Bacteria</taxon>
        <taxon>Pseudomonadati</taxon>
        <taxon>Pseudomonadota</taxon>
        <taxon>Betaproteobacteria</taxon>
        <taxon>Burkholderiales</taxon>
        <taxon>Burkholderiaceae</taxon>
        <taxon>Cupriavidus</taxon>
    </lineage>
</organism>